<gene>
    <name type="primary">RMD9</name>
    <name type="ordered locus">DEHA2F04422g</name>
</gene>
<keyword id="KW-0472">Membrane</keyword>
<keyword id="KW-0496">Mitochondrion</keyword>
<keyword id="KW-0999">Mitochondrion inner membrane</keyword>
<keyword id="KW-0597">Phosphoprotein</keyword>
<keyword id="KW-1185">Reference proteome</keyword>
<keyword id="KW-0749">Sporulation</keyword>
<keyword id="KW-0809">Transit peptide</keyword>
<sequence>MFRLLSANTQQTLRPAILSKVRSNKANISLPSSSIQVNPPSPAQYNLTCQFTRHNSSASSQKTKSSKVDAFVNKAQRDPVLREALDSEANSKLNYFKEQLSLAFQYRSAKDRDSQRAFVATVDNLFKAFEDESLRSSYSSRDLYSYTQILNFSVYHNRTNRLSSSRNRDSDQYQNENLHDEVLIKSAVLNLSETIISGEFNKILNANILSYLFYSMKQFQLYPEMLNLWENGVNDGETGKLFLNEKILAVILPIAYEQKRFSYEEILHIYELNTKELSTVQHELLCSIGKIAIGSGDYSRGLDSLEALLQLYESKQQSTQHVLASLGELHLNFIGSCKDIKISKHFFDKVVQYDLPYYVCLKVPYIQSLLQNCFELNESLDNIIYFWKSTITHYSNEKNSAGLNSRYSILNNTFFTIFFKIYPTLNAESFNKLREVIALYAEIKPVDEVFLNTIIGNYSWGDKNVLEQLIENYSIYNVKRTPVSYRICLKKTGELPQYTNEDILIKWNDSLQHLDQNGFNYIPIADWAALRDATILSNSGSDRKDFYLAVANQYKDYIQDQRSCIRFVKYWLKKREHLKSFSTLTFGSDADFSNEVDIVVPQFRHLKPNINYQKISSKIIGK</sequence>
<protein>
    <recommendedName>
        <fullName evidence="1">RNA-binding protein RMD9, mitochondrial</fullName>
    </recommendedName>
</protein>
<feature type="transit peptide" description="Mitochondrion" evidence="2">
    <location>
        <begin position="1"/>
        <end position="108"/>
    </location>
</feature>
<feature type="chain" id="PRO_0000301784" description="RNA-binding protein RMD9, mitochondrial">
    <location>
        <begin position="109"/>
        <end position="622"/>
    </location>
</feature>
<comment type="function">
    <text evidence="1">Binds the 3'-UTR of mitochondrial mRNAs. Involved in the processing or stability of mitochondrial mRNAs.</text>
</comment>
<comment type="subunit">
    <text evidence="1">Monomer.</text>
</comment>
<comment type="subcellular location">
    <subcellularLocation>
        <location evidence="1">Mitochondrion inner membrane</location>
        <topology evidence="1">Peripheral membrane protein</topology>
        <orientation evidence="1">Matrix side</orientation>
    </subcellularLocation>
</comment>
<comment type="PTM">
    <text evidence="1">Phosphorylated. Phosphorylation promotes binding to RNA.</text>
</comment>
<comment type="similarity">
    <text evidence="3">Belongs to the RMD9 family.</text>
</comment>
<reference key="1">
    <citation type="journal article" date="2004" name="Nature">
        <title>Genome evolution in yeasts.</title>
        <authorList>
            <person name="Dujon B."/>
            <person name="Sherman D."/>
            <person name="Fischer G."/>
            <person name="Durrens P."/>
            <person name="Casaregola S."/>
            <person name="Lafontaine I."/>
            <person name="de Montigny J."/>
            <person name="Marck C."/>
            <person name="Neuveglise C."/>
            <person name="Talla E."/>
            <person name="Goffard N."/>
            <person name="Frangeul L."/>
            <person name="Aigle M."/>
            <person name="Anthouard V."/>
            <person name="Babour A."/>
            <person name="Barbe V."/>
            <person name="Barnay S."/>
            <person name="Blanchin S."/>
            <person name="Beckerich J.-M."/>
            <person name="Beyne E."/>
            <person name="Bleykasten C."/>
            <person name="Boisrame A."/>
            <person name="Boyer J."/>
            <person name="Cattolico L."/>
            <person name="Confanioleri F."/>
            <person name="de Daruvar A."/>
            <person name="Despons L."/>
            <person name="Fabre E."/>
            <person name="Fairhead C."/>
            <person name="Ferry-Dumazet H."/>
            <person name="Groppi A."/>
            <person name="Hantraye F."/>
            <person name="Hennequin C."/>
            <person name="Jauniaux N."/>
            <person name="Joyet P."/>
            <person name="Kachouri R."/>
            <person name="Kerrest A."/>
            <person name="Koszul R."/>
            <person name="Lemaire M."/>
            <person name="Lesur I."/>
            <person name="Ma L."/>
            <person name="Muller H."/>
            <person name="Nicaud J.-M."/>
            <person name="Nikolski M."/>
            <person name="Oztas S."/>
            <person name="Ozier-Kalogeropoulos O."/>
            <person name="Pellenz S."/>
            <person name="Potier S."/>
            <person name="Richard G.-F."/>
            <person name="Straub M.-L."/>
            <person name="Suleau A."/>
            <person name="Swennen D."/>
            <person name="Tekaia F."/>
            <person name="Wesolowski-Louvel M."/>
            <person name="Westhof E."/>
            <person name="Wirth B."/>
            <person name="Zeniou-Meyer M."/>
            <person name="Zivanovic Y."/>
            <person name="Bolotin-Fukuhara M."/>
            <person name="Thierry A."/>
            <person name="Bouchier C."/>
            <person name="Caudron B."/>
            <person name="Scarpelli C."/>
            <person name="Gaillardin C."/>
            <person name="Weissenbach J."/>
            <person name="Wincker P."/>
            <person name="Souciet J.-L."/>
        </authorList>
    </citation>
    <scope>NUCLEOTIDE SEQUENCE [LARGE SCALE GENOMIC DNA]</scope>
    <source>
        <strain>ATCC 36239 / CBS 767 / BCRC 21394 / JCM 1990 / NBRC 0083 / IGC 2968</strain>
    </source>
</reference>
<name>RMD9_DEBHA</name>
<accession>Q6BML3</accession>
<evidence type="ECO:0000250" key="1">
    <source>
        <dbReference type="UniProtKB" id="P53140"/>
    </source>
</evidence>
<evidence type="ECO:0000255" key="2"/>
<evidence type="ECO:0000305" key="3"/>
<organism>
    <name type="scientific">Debaryomyces hansenii (strain ATCC 36239 / CBS 767 / BCRC 21394 / JCM 1990 / NBRC 0083 / IGC 2968)</name>
    <name type="common">Yeast</name>
    <name type="synonym">Torulaspora hansenii</name>
    <dbReference type="NCBI Taxonomy" id="284592"/>
    <lineage>
        <taxon>Eukaryota</taxon>
        <taxon>Fungi</taxon>
        <taxon>Dikarya</taxon>
        <taxon>Ascomycota</taxon>
        <taxon>Saccharomycotina</taxon>
        <taxon>Pichiomycetes</taxon>
        <taxon>Debaryomycetaceae</taxon>
        <taxon>Debaryomyces</taxon>
    </lineage>
</organism>
<proteinExistence type="inferred from homology"/>
<dbReference type="EMBL" id="CR382138">
    <property type="protein sequence ID" value="CAG88876.2"/>
    <property type="molecule type" value="Genomic_DNA"/>
</dbReference>
<dbReference type="RefSeq" id="XP_460558.2">
    <property type="nucleotide sequence ID" value="XM_460558.1"/>
</dbReference>
<dbReference type="SMR" id="Q6BML3"/>
<dbReference type="FunCoup" id="Q6BML3">
    <property type="interactions" value="71"/>
</dbReference>
<dbReference type="STRING" id="284592.Q6BML3"/>
<dbReference type="GeneID" id="2903216"/>
<dbReference type="KEGG" id="dha:DEHA2F04422g"/>
<dbReference type="eggNOG" id="ENOG502QUSW">
    <property type="taxonomic scope" value="Eukaryota"/>
</dbReference>
<dbReference type="HOGENOM" id="CLU_019840_1_0_1"/>
<dbReference type="InParanoid" id="Q6BML3"/>
<dbReference type="OMA" id="WENGVND"/>
<dbReference type="OrthoDB" id="4081443at2759"/>
<dbReference type="Proteomes" id="UP000000599">
    <property type="component" value="Chromosome F"/>
</dbReference>
<dbReference type="GO" id="GO:0005743">
    <property type="term" value="C:mitochondrial inner membrane"/>
    <property type="evidence" value="ECO:0007669"/>
    <property type="project" value="UniProtKB-SubCell"/>
</dbReference>
<dbReference type="GO" id="GO:0030435">
    <property type="term" value="P:sporulation resulting in formation of a cellular spore"/>
    <property type="evidence" value="ECO:0007669"/>
    <property type="project" value="UniProtKB-KW"/>
</dbReference>